<evidence type="ECO:0000255" key="1">
    <source>
        <dbReference type="HAMAP-Rule" id="MF_01656"/>
    </source>
</evidence>
<sequence>MNGKKLYISDVTLRDGMHAIRHQYSLENVRQIAKALDDARVDSIEVAHGDGLQGSSFNYGFGAHSDLEWIEAAADVVRHAKIATLLLPGIGTIHDLKNAWQAGARVVRVATHCTEADVSAQHIQYARELGMDTVGFLMMSHMTTPENLAKQAKLMEGYGATCIYVVDSGGAMNMSDIRDRFRALKAVLKPETQTGMHAHHNLSLGVANSIAAVEEGCDRIDASFAGMGAGAGNAPLEVFIAAADKLGWQHGTDLYALMDAADDLVRPLQDRPVRVDRETLALGYAGVYSSFLRHCETAAARYGLSAVDILVELGKRRMVGGQEDMIVDVALDLRNNK</sequence>
<comment type="function">
    <text evidence="1">Catalyzes the retro-aldol cleavage of 4-hydroxy-2-oxopentanoate to pyruvate and acetaldehyde. Is involved in the meta-cleavage pathway for the degradation of aromatic compounds.</text>
</comment>
<comment type="catalytic activity">
    <reaction evidence="1">
        <text>(S)-4-hydroxy-2-oxopentanoate = acetaldehyde + pyruvate</text>
        <dbReference type="Rhea" id="RHEA:22624"/>
        <dbReference type="ChEBI" id="CHEBI:15343"/>
        <dbReference type="ChEBI" id="CHEBI:15361"/>
        <dbReference type="ChEBI" id="CHEBI:73143"/>
        <dbReference type="EC" id="4.1.3.39"/>
    </reaction>
</comment>
<comment type="pathway">
    <text evidence="1">Aromatic compound metabolism; 3-phenylpropanoate degradation.</text>
</comment>
<comment type="subunit">
    <text evidence="1">Interacts with MhpF.</text>
</comment>
<comment type="similarity">
    <text evidence="1">Belongs to the 4-hydroxy-2-oxovalerate aldolase family.</text>
</comment>
<accession>Q3Z554</accession>
<protein>
    <recommendedName>
        <fullName evidence="1">4-hydroxy-2-oxovalerate aldolase</fullName>
        <shortName evidence="1">HOA</shortName>
        <ecNumber evidence="1">4.1.3.39</ecNumber>
    </recommendedName>
    <alternativeName>
        <fullName evidence="1">4-hydroxy-2-keto-pentanoic acid aldolase</fullName>
    </alternativeName>
    <alternativeName>
        <fullName evidence="1">4-hydroxy-2-oxopentanoate aldolase</fullName>
    </alternativeName>
</protein>
<proteinExistence type="inferred from homology"/>
<feature type="chain" id="PRO_0000337808" description="4-hydroxy-2-oxovalerate aldolase">
    <location>
        <begin position="1"/>
        <end position="337"/>
    </location>
</feature>
<feature type="domain" description="Pyruvate carboxyltransferase" evidence="1">
    <location>
        <begin position="6"/>
        <end position="258"/>
    </location>
</feature>
<feature type="active site" description="Proton acceptor" evidence="1">
    <location>
        <position position="18"/>
    </location>
</feature>
<feature type="binding site" evidence="1">
    <location>
        <begin position="14"/>
        <end position="15"/>
    </location>
    <ligand>
        <name>substrate</name>
    </ligand>
</feature>
<feature type="binding site" evidence="1">
    <location>
        <position position="15"/>
    </location>
    <ligand>
        <name>Mn(2+)</name>
        <dbReference type="ChEBI" id="CHEBI:29035"/>
    </ligand>
</feature>
<feature type="binding site" evidence="1">
    <location>
        <position position="168"/>
    </location>
    <ligand>
        <name>substrate</name>
    </ligand>
</feature>
<feature type="binding site" evidence="1">
    <location>
        <position position="197"/>
    </location>
    <ligand>
        <name>Mn(2+)</name>
        <dbReference type="ChEBI" id="CHEBI:29035"/>
    </ligand>
</feature>
<feature type="binding site" evidence="1">
    <location>
        <position position="197"/>
    </location>
    <ligand>
        <name>substrate</name>
    </ligand>
</feature>
<feature type="binding site" evidence="1">
    <location>
        <position position="199"/>
    </location>
    <ligand>
        <name>Mn(2+)</name>
        <dbReference type="ChEBI" id="CHEBI:29035"/>
    </ligand>
</feature>
<feature type="binding site" evidence="1">
    <location>
        <position position="288"/>
    </location>
    <ligand>
        <name>substrate</name>
    </ligand>
</feature>
<feature type="site" description="Transition state stabilizer" evidence="1">
    <location>
        <position position="14"/>
    </location>
</feature>
<reference key="1">
    <citation type="journal article" date="2005" name="Nucleic Acids Res.">
        <title>Genome dynamics and diversity of Shigella species, the etiologic agents of bacillary dysentery.</title>
        <authorList>
            <person name="Yang F."/>
            <person name="Yang J."/>
            <person name="Zhang X."/>
            <person name="Chen L."/>
            <person name="Jiang Y."/>
            <person name="Yan Y."/>
            <person name="Tang X."/>
            <person name="Wang J."/>
            <person name="Xiong Z."/>
            <person name="Dong J."/>
            <person name="Xue Y."/>
            <person name="Zhu Y."/>
            <person name="Xu X."/>
            <person name="Sun L."/>
            <person name="Chen S."/>
            <person name="Nie H."/>
            <person name="Peng J."/>
            <person name="Xu J."/>
            <person name="Wang Y."/>
            <person name="Yuan Z."/>
            <person name="Wen Y."/>
            <person name="Yao Z."/>
            <person name="Shen Y."/>
            <person name="Qiang B."/>
            <person name="Hou Y."/>
            <person name="Yu J."/>
            <person name="Jin Q."/>
        </authorList>
    </citation>
    <scope>NUCLEOTIDE SEQUENCE [LARGE SCALE GENOMIC DNA]</scope>
    <source>
        <strain>Ss046</strain>
    </source>
</reference>
<name>HOA_SHISS</name>
<organism>
    <name type="scientific">Shigella sonnei (strain Ss046)</name>
    <dbReference type="NCBI Taxonomy" id="300269"/>
    <lineage>
        <taxon>Bacteria</taxon>
        <taxon>Pseudomonadati</taxon>
        <taxon>Pseudomonadota</taxon>
        <taxon>Gammaproteobacteria</taxon>
        <taxon>Enterobacterales</taxon>
        <taxon>Enterobacteriaceae</taxon>
        <taxon>Shigella</taxon>
    </lineage>
</organism>
<gene>
    <name evidence="1" type="primary">mhpE</name>
    <name type="ordered locus">SSON_0331</name>
</gene>
<keyword id="KW-0058">Aromatic hydrocarbons catabolism</keyword>
<keyword id="KW-0456">Lyase</keyword>
<keyword id="KW-0464">Manganese</keyword>
<keyword id="KW-0479">Metal-binding</keyword>
<keyword id="KW-1185">Reference proteome</keyword>
<dbReference type="EC" id="4.1.3.39" evidence="1"/>
<dbReference type="EMBL" id="CP000038">
    <property type="protein sequence ID" value="AAZ87108.1"/>
    <property type="molecule type" value="Genomic_DNA"/>
</dbReference>
<dbReference type="RefSeq" id="WP_001013516.1">
    <property type="nucleotide sequence ID" value="NC_007384.1"/>
</dbReference>
<dbReference type="SMR" id="Q3Z554"/>
<dbReference type="KEGG" id="ssn:SSON_0331"/>
<dbReference type="HOGENOM" id="CLU_049173_0_0_6"/>
<dbReference type="UniPathway" id="UPA00714"/>
<dbReference type="Proteomes" id="UP000002529">
    <property type="component" value="Chromosome"/>
</dbReference>
<dbReference type="GO" id="GO:0003852">
    <property type="term" value="F:2-isopropylmalate synthase activity"/>
    <property type="evidence" value="ECO:0007669"/>
    <property type="project" value="TreeGrafter"/>
</dbReference>
<dbReference type="GO" id="GO:0008701">
    <property type="term" value="F:4-hydroxy-2-oxovalerate aldolase activity"/>
    <property type="evidence" value="ECO:0007669"/>
    <property type="project" value="UniProtKB-UniRule"/>
</dbReference>
<dbReference type="GO" id="GO:0030145">
    <property type="term" value="F:manganese ion binding"/>
    <property type="evidence" value="ECO:0007669"/>
    <property type="project" value="UniProtKB-UniRule"/>
</dbReference>
<dbReference type="GO" id="GO:0019380">
    <property type="term" value="P:3-phenylpropionate catabolic process"/>
    <property type="evidence" value="ECO:0007669"/>
    <property type="project" value="UniProtKB-UniRule"/>
</dbReference>
<dbReference type="GO" id="GO:0009098">
    <property type="term" value="P:L-leucine biosynthetic process"/>
    <property type="evidence" value="ECO:0007669"/>
    <property type="project" value="TreeGrafter"/>
</dbReference>
<dbReference type="CDD" id="cd07943">
    <property type="entry name" value="DRE_TIM_HOA"/>
    <property type="match status" value="1"/>
</dbReference>
<dbReference type="FunFam" id="1.10.8.60:FF:000042">
    <property type="entry name" value="4-hydroxy-2-oxovalerate aldolase"/>
    <property type="match status" value="1"/>
</dbReference>
<dbReference type="FunFam" id="3.20.20.70:FF:000072">
    <property type="entry name" value="4-hydroxy-2-oxovalerate aldolase"/>
    <property type="match status" value="1"/>
</dbReference>
<dbReference type="Gene3D" id="1.10.8.60">
    <property type="match status" value="1"/>
</dbReference>
<dbReference type="Gene3D" id="3.20.20.70">
    <property type="entry name" value="Aldolase class I"/>
    <property type="match status" value="1"/>
</dbReference>
<dbReference type="HAMAP" id="MF_01656">
    <property type="entry name" value="HOA"/>
    <property type="match status" value="1"/>
</dbReference>
<dbReference type="InterPro" id="IPR050073">
    <property type="entry name" value="2-IPM_HCS-like"/>
</dbReference>
<dbReference type="InterPro" id="IPR017629">
    <property type="entry name" value="4OH_2_O-val_aldolase"/>
</dbReference>
<dbReference type="InterPro" id="IPR013785">
    <property type="entry name" value="Aldolase_TIM"/>
</dbReference>
<dbReference type="InterPro" id="IPR012425">
    <property type="entry name" value="DmpG_comm"/>
</dbReference>
<dbReference type="InterPro" id="IPR035685">
    <property type="entry name" value="DRE_TIM_HOA"/>
</dbReference>
<dbReference type="InterPro" id="IPR000891">
    <property type="entry name" value="PYR_CT"/>
</dbReference>
<dbReference type="NCBIfam" id="TIGR03217">
    <property type="entry name" value="4OH_2_O_val_ald"/>
    <property type="match status" value="1"/>
</dbReference>
<dbReference type="NCBIfam" id="NF006049">
    <property type="entry name" value="PRK08195.1"/>
    <property type="match status" value="1"/>
</dbReference>
<dbReference type="PANTHER" id="PTHR10277:SF9">
    <property type="entry name" value="2-ISOPROPYLMALATE SYNTHASE 1, CHLOROPLASTIC-RELATED"/>
    <property type="match status" value="1"/>
</dbReference>
<dbReference type="PANTHER" id="PTHR10277">
    <property type="entry name" value="HOMOCITRATE SYNTHASE-RELATED"/>
    <property type="match status" value="1"/>
</dbReference>
<dbReference type="Pfam" id="PF07836">
    <property type="entry name" value="DmpG_comm"/>
    <property type="match status" value="1"/>
</dbReference>
<dbReference type="Pfam" id="PF00682">
    <property type="entry name" value="HMGL-like"/>
    <property type="match status" value="1"/>
</dbReference>
<dbReference type="SUPFAM" id="SSF51569">
    <property type="entry name" value="Aldolase"/>
    <property type="match status" value="1"/>
</dbReference>
<dbReference type="SUPFAM" id="SSF89000">
    <property type="entry name" value="post-HMGL domain-like"/>
    <property type="match status" value="1"/>
</dbReference>
<dbReference type="PROSITE" id="PS50991">
    <property type="entry name" value="PYR_CT"/>
    <property type="match status" value="1"/>
</dbReference>